<keyword id="KW-0408">Iron</keyword>
<keyword id="KW-0456">Lyase</keyword>
<keyword id="KW-0464">Manganese</keyword>
<organism>
    <name type="scientific">Paraburkholderia phytofirmans (strain DSM 17436 / LMG 22146 / PsJN)</name>
    <name type="common">Burkholderia phytofirmans</name>
    <dbReference type="NCBI Taxonomy" id="398527"/>
    <lineage>
        <taxon>Bacteria</taxon>
        <taxon>Pseudomonadati</taxon>
        <taxon>Pseudomonadota</taxon>
        <taxon>Betaproteobacteria</taxon>
        <taxon>Burkholderiales</taxon>
        <taxon>Burkholderiaceae</taxon>
        <taxon>Paraburkholderia</taxon>
    </lineage>
</organism>
<feature type="chain" id="PRO_1000094213" description="Mannonate dehydratase">
    <location>
        <begin position="1"/>
        <end position="352"/>
    </location>
</feature>
<proteinExistence type="inferred from homology"/>
<sequence>MKMTFRWYGDTDPVPLAYIRQIPGMVGVVSAIYDVPVGEVWPIDRIRSLKEKIEAHGLTLEVIESVPVHEDIKLGKPTRDTLIVNYGQTLRNLGACGVKVVCYNFMPVFDWTRTSLEMPLPDGSTTLAFDTQAIRELDVSEGIQLPGWDASYRPEQLKALLRDYEALDEAGLWANLDYFLRAIIPVAKEAGIKMAIHPDDPPRPIFGLPRIVKNRADLQRVLDIVDDPANGLTLCSGSLGADLQNDIPALVREFGARGRIHFAHLRNVQTNAAGDFHETSHRSADGSLDMAEIVKAYFETGFEGYARPDHGRMIWGETGRAGYGLFDRALGAVYLNGIWEGLAKHPADHAAE</sequence>
<reference key="1">
    <citation type="journal article" date="2011" name="J. Bacteriol.">
        <title>Complete genome sequence of the plant growth-promoting endophyte Burkholderia phytofirmans strain PsJN.</title>
        <authorList>
            <person name="Weilharter A."/>
            <person name="Mitter B."/>
            <person name="Shin M.V."/>
            <person name="Chain P.S."/>
            <person name="Nowak J."/>
            <person name="Sessitsch A."/>
        </authorList>
    </citation>
    <scope>NUCLEOTIDE SEQUENCE [LARGE SCALE GENOMIC DNA]</scope>
    <source>
        <strain>DSM 17436 / LMG 22146 / PsJN</strain>
    </source>
</reference>
<gene>
    <name evidence="1" type="primary">uxuA</name>
    <name type="ordered locus">Bphyt_5748</name>
</gene>
<comment type="function">
    <text evidence="1">Catalyzes the dehydration of D-mannonate.</text>
</comment>
<comment type="catalytic activity">
    <reaction evidence="1">
        <text>D-mannonate = 2-dehydro-3-deoxy-D-gluconate + H2O</text>
        <dbReference type="Rhea" id="RHEA:20097"/>
        <dbReference type="ChEBI" id="CHEBI:15377"/>
        <dbReference type="ChEBI" id="CHEBI:17767"/>
        <dbReference type="ChEBI" id="CHEBI:57990"/>
        <dbReference type="EC" id="4.2.1.8"/>
    </reaction>
</comment>
<comment type="cofactor">
    <cofactor evidence="1">
        <name>Fe(2+)</name>
        <dbReference type="ChEBI" id="CHEBI:29033"/>
    </cofactor>
    <cofactor evidence="1">
        <name>Mn(2+)</name>
        <dbReference type="ChEBI" id="CHEBI:29035"/>
    </cofactor>
</comment>
<comment type="pathway">
    <text evidence="1">Carbohydrate metabolism; pentose and glucuronate interconversion.</text>
</comment>
<comment type="similarity">
    <text evidence="1">Belongs to the mannonate dehydratase family.</text>
</comment>
<accession>B2TGB8</accession>
<name>UXUA_PARPJ</name>
<protein>
    <recommendedName>
        <fullName evidence="1">Mannonate dehydratase</fullName>
        <ecNumber evidence="1">4.2.1.8</ecNumber>
    </recommendedName>
    <alternativeName>
        <fullName evidence="1">D-mannonate hydro-lyase</fullName>
    </alternativeName>
</protein>
<dbReference type="EC" id="4.2.1.8" evidence="1"/>
<dbReference type="EMBL" id="CP001053">
    <property type="protein sequence ID" value="ACD20090.1"/>
    <property type="molecule type" value="Genomic_DNA"/>
</dbReference>
<dbReference type="RefSeq" id="WP_012427599.1">
    <property type="nucleotide sequence ID" value="NC_010676.1"/>
</dbReference>
<dbReference type="SMR" id="B2TGB8"/>
<dbReference type="STRING" id="398527.Bphyt_5748"/>
<dbReference type="KEGG" id="bpy:Bphyt_5748"/>
<dbReference type="eggNOG" id="COG1312">
    <property type="taxonomic scope" value="Bacteria"/>
</dbReference>
<dbReference type="HOGENOM" id="CLU_058621_1_0_4"/>
<dbReference type="UniPathway" id="UPA00246"/>
<dbReference type="Proteomes" id="UP000001739">
    <property type="component" value="Chromosome 2"/>
</dbReference>
<dbReference type="GO" id="GO:0008198">
    <property type="term" value="F:ferrous iron binding"/>
    <property type="evidence" value="ECO:0007669"/>
    <property type="project" value="TreeGrafter"/>
</dbReference>
<dbReference type="GO" id="GO:0030145">
    <property type="term" value="F:manganese ion binding"/>
    <property type="evidence" value="ECO:0007669"/>
    <property type="project" value="TreeGrafter"/>
</dbReference>
<dbReference type="GO" id="GO:0008927">
    <property type="term" value="F:mannonate dehydratase activity"/>
    <property type="evidence" value="ECO:0007669"/>
    <property type="project" value="UniProtKB-UniRule"/>
</dbReference>
<dbReference type="GO" id="GO:0042840">
    <property type="term" value="P:D-glucuronate catabolic process"/>
    <property type="evidence" value="ECO:0007669"/>
    <property type="project" value="TreeGrafter"/>
</dbReference>
<dbReference type="Gene3D" id="3.20.20.150">
    <property type="entry name" value="Divalent-metal-dependent TIM barrel enzymes"/>
    <property type="match status" value="1"/>
</dbReference>
<dbReference type="HAMAP" id="MF_00106">
    <property type="entry name" value="UxuA"/>
    <property type="match status" value="1"/>
</dbReference>
<dbReference type="InterPro" id="IPR004628">
    <property type="entry name" value="Man_deHydtase"/>
</dbReference>
<dbReference type="InterPro" id="IPR036237">
    <property type="entry name" value="Xyl_isomerase-like_sf"/>
</dbReference>
<dbReference type="NCBIfam" id="NF003027">
    <property type="entry name" value="PRK03906.1"/>
    <property type="match status" value="2"/>
</dbReference>
<dbReference type="NCBIfam" id="TIGR00695">
    <property type="entry name" value="uxuA"/>
    <property type="match status" value="1"/>
</dbReference>
<dbReference type="PANTHER" id="PTHR30387">
    <property type="entry name" value="MANNONATE DEHYDRATASE"/>
    <property type="match status" value="1"/>
</dbReference>
<dbReference type="PANTHER" id="PTHR30387:SF2">
    <property type="entry name" value="MANNONATE DEHYDRATASE"/>
    <property type="match status" value="1"/>
</dbReference>
<dbReference type="Pfam" id="PF03786">
    <property type="entry name" value="UxuA"/>
    <property type="match status" value="1"/>
</dbReference>
<dbReference type="PIRSF" id="PIRSF016049">
    <property type="entry name" value="Man_dehyd"/>
    <property type="match status" value="1"/>
</dbReference>
<dbReference type="SUPFAM" id="SSF51658">
    <property type="entry name" value="Xylose isomerase-like"/>
    <property type="match status" value="1"/>
</dbReference>
<evidence type="ECO:0000255" key="1">
    <source>
        <dbReference type="HAMAP-Rule" id="MF_00106"/>
    </source>
</evidence>